<name>PERC1_HUMAN</name>
<feature type="chain" id="PRO_0000447991" description="Protein PERCC1">
    <location>
        <begin position="1"/>
        <end position="267"/>
    </location>
</feature>
<feature type="region of interest" description="Disordered" evidence="2">
    <location>
        <begin position="19"/>
        <end position="88"/>
    </location>
</feature>
<feature type="region of interest" description="Disordered" evidence="2">
    <location>
        <begin position="142"/>
        <end position="163"/>
    </location>
</feature>
<feature type="region of interest" description="Disordered" evidence="2">
    <location>
        <begin position="247"/>
        <end position="267"/>
    </location>
</feature>
<feature type="compositionally biased region" description="Acidic residues" evidence="2">
    <location>
        <begin position="28"/>
        <end position="50"/>
    </location>
</feature>
<feature type="compositionally biased region" description="Low complexity" evidence="2">
    <location>
        <begin position="74"/>
        <end position="83"/>
    </location>
</feature>
<sequence length="267" mass="29212">MAAGVIRPLCDFQLPLLRHHPFLPSDPEPPETSEEEEEEEEEEEEEEGEGEGLGGCGRILPSSGRAEATEEAAPEGPGSPETPLQLLRFSELISDDIRRYFGRKDKGQDPDACDVYADSRPPRSTARELYYADLVRLARGGSLEDEDTPEPRVPQGQVCRPGLSGDRAQPLGPLAELFDYGLQQYWGSRAAAGWSLTLERKYGHITPMAQRKLPPSFWKEPTPSPLGLLHPGTPDFSDLLASWSTEACPELPGRGTPALEGARPAEA</sequence>
<accession>A0A1W2PR82</accession>
<accession>Q96RY9</accession>
<protein>
    <recommendedName>
        <fullName evidence="5">Protein PERCC1</fullName>
    </recommendedName>
    <alternativeName>
        <fullName evidence="4">Proline and glutamage-rich protein with a coiled coil domain</fullName>
    </alternativeName>
</protein>
<proteinExistence type="inferred from homology"/>
<evidence type="ECO:0000250" key="1">
    <source>
        <dbReference type="UniProtKB" id="A0A286YDK6"/>
    </source>
</evidence>
<evidence type="ECO:0000256" key="2">
    <source>
        <dbReference type="SAM" id="MobiDB-lite"/>
    </source>
</evidence>
<evidence type="ECO:0000269" key="3">
    <source>
    </source>
</evidence>
<evidence type="ECO:0000303" key="4">
    <source>
    </source>
</evidence>
<evidence type="ECO:0000305" key="5"/>
<evidence type="ECO:0000312" key="6">
    <source>
        <dbReference type="HGNC" id="HGNC:52293"/>
    </source>
</evidence>
<comment type="function">
    <text evidence="1 3">Plays a critical role in intestinal function (PubMed:31217582). Acts by promoting the development of enteroendocrine cells (EECs) of the gastrointestinal tract and pancreas (By similarity). It is thereby required for normal enteroendocrine peptide hormone secretion (By similarity).</text>
</comment>
<comment type="disease" evidence="3">
    <disease id="DI-05692">
        <name>Diarrhea 11, malabsorptive, congenital</name>
        <acronym>DIAR11</acronym>
        <description>A disease characterized by severe, life-threatening watery diarrhea associated with generalized malabsorption and a paucity of enteroendocrine cells. DIAR11 is characterized by onset of intractable diarrhea within the first few weeks of life.</description>
        <dbReference type="MIM" id="618662"/>
    </disease>
    <text>The disease is caused by variants affecting the gene represented in this entry.</text>
</comment>
<comment type="sequence caution" evidence="5">
    <conflict type="erroneous gene model prediction">
        <sequence resource="EMBL-CDS" id="AAK61281"/>
    </conflict>
</comment>
<organism>
    <name type="scientific">Homo sapiens</name>
    <name type="common">Human</name>
    <dbReference type="NCBI Taxonomy" id="9606"/>
    <lineage>
        <taxon>Eukaryota</taxon>
        <taxon>Metazoa</taxon>
        <taxon>Chordata</taxon>
        <taxon>Craniata</taxon>
        <taxon>Vertebrata</taxon>
        <taxon>Euteleostomi</taxon>
        <taxon>Mammalia</taxon>
        <taxon>Eutheria</taxon>
        <taxon>Euarchontoglires</taxon>
        <taxon>Primates</taxon>
        <taxon>Haplorrhini</taxon>
        <taxon>Catarrhini</taxon>
        <taxon>Hominidae</taxon>
        <taxon>Homo</taxon>
    </lineage>
</organism>
<reference key="1">
    <citation type="journal article" date="2004" name="Nature">
        <title>The sequence and analysis of duplication-rich human chromosome 16.</title>
        <authorList>
            <person name="Martin J."/>
            <person name="Han C."/>
            <person name="Gordon L.A."/>
            <person name="Terry A."/>
            <person name="Prabhakar S."/>
            <person name="She X."/>
            <person name="Xie G."/>
            <person name="Hellsten U."/>
            <person name="Chan Y.M."/>
            <person name="Altherr M."/>
            <person name="Couronne O."/>
            <person name="Aerts A."/>
            <person name="Bajorek E."/>
            <person name="Black S."/>
            <person name="Blumer H."/>
            <person name="Branscomb E."/>
            <person name="Brown N.C."/>
            <person name="Bruno W.J."/>
            <person name="Buckingham J.M."/>
            <person name="Callen D.F."/>
            <person name="Campbell C.S."/>
            <person name="Campbell M.L."/>
            <person name="Campbell E.W."/>
            <person name="Caoile C."/>
            <person name="Challacombe J.F."/>
            <person name="Chasteen L.A."/>
            <person name="Chertkov O."/>
            <person name="Chi H.C."/>
            <person name="Christensen M."/>
            <person name="Clark L.M."/>
            <person name="Cohn J.D."/>
            <person name="Denys M."/>
            <person name="Detter J.C."/>
            <person name="Dickson M."/>
            <person name="Dimitrijevic-Bussod M."/>
            <person name="Escobar J."/>
            <person name="Fawcett J.J."/>
            <person name="Flowers D."/>
            <person name="Fotopulos D."/>
            <person name="Glavina T."/>
            <person name="Gomez M."/>
            <person name="Gonzales E."/>
            <person name="Goodstein D."/>
            <person name="Goodwin L.A."/>
            <person name="Grady D.L."/>
            <person name="Grigoriev I."/>
            <person name="Groza M."/>
            <person name="Hammon N."/>
            <person name="Hawkins T."/>
            <person name="Haydu L."/>
            <person name="Hildebrand C.E."/>
            <person name="Huang W."/>
            <person name="Israni S."/>
            <person name="Jett J."/>
            <person name="Jewett P.B."/>
            <person name="Kadner K."/>
            <person name="Kimball H."/>
            <person name="Kobayashi A."/>
            <person name="Krawczyk M.-C."/>
            <person name="Leyba T."/>
            <person name="Longmire J.L."/>
            <person name="Lopez F."/>
            <person name="Lou Y."/>
            <person name="Lowry S."/>
            <person name="Ludeman T."/>
            <person name="Manohar C.F."/>
            <person name="Mark G.A."/>
            <person name="McMurray K.L."/>
            <person name="Meincke L.J."/>
            <person name="Morgan J."/>
            <person name="Moyzis R.K."/>
            <person name="Mundt M.O."/>
            <person name="Munk A.C."/>
            <person name="Nandkeshwar R.D."/>
            <person name="Pitluck S."/>
            <person name="Pollard M."/>
            <person name="Predki P."/>
            <person name="Parson-Quintana B."/>
            <person name="Ramirez L."/>
            <person name="Rash S."/>
            <person name="Retterer J."/>
            <person name="Ricke D.O."/>
            <person name="Robinson D.L."/>
            <person name="Rodriguez A."/>
            <person name="Salamov A."/>
            <person name="Saunders E.H."/>
            <person name="Scott D."/>
            <person name="Shough T."/>
            <person name="Stallings R.L."/>
            <person name="Stalvey M."/>
            <person name="Sutherland R.D."/>
            <person name="Tapia R."/>
            <person name="Tesmer J.G."/>
            <person name="Thayer N."/>
            <person name="Thompson L.S."/>
            <person name="Tice H."/>
            <person name="Torney D.C."/>
            <person name="Tran-Gyamfi M."/>
            <person name="Tsai M."/>
            <person name="Ulanovsky L.E."/>
            <person name="Ustaszewska A."/>
            <person name="Vo N."/>
            <person name="White P.S."/>
            <person name="Williams A.L."/>
            <person name="Wills P.L."/>
            <person name="Wu J.-R."/>
            <person name="Wu K."/>
            <person name="Yang J."/>
            <person name="DeJong P."/>
            <person name="Bruce D."/>
            <person name="Doggett N.A."/>
            <person name="Deaven L."/>
            <person name="Schmutz J."/>
            <person name="Grimwood J."/>
            <person name="Richardson P."/>
            <person name="Rokhsar D.S."/>
            <person name="Eichler E.E."/>
            <person name="Gilna P."/>
            <person name="Lucas S.M."/>
            <person name="Myers R.M."/>
            <person name="Rubin E.M."/>
            <person name="Pennacchio L.A."/>
        </authorList>
    </citation>
    <scope>NUCLEOTIDE SEQUENCE [LARGE SCALE GENOMIC DNA]</scope>
</reference>
<reference key="2">
    <citation type="journal article" date="2001" name="Hum. Mol. Genet.">
        <title>Sequence, structure and pathology of the fully annotated terminal 2 Mb of the short arm of human chromosome 16.</title>
        <authorList>
            <person name="Daniels R.J."/>
            <person name="Peden J.F."/>
            <person name="Lloyd C."/>
            <person name="Horsley S.W."/>
            <person name="Clark K."/>
            <person name="Tufarelli C."/>
            <person name="Kearney L."/>
            <person name="Buckle V.J."/>
            <person name="Doggett N.A."/>
            <person name="Flint J."/>
            <person name="Higgs D.R."/>
        </authorList>
    </citation>
    <scope>NUCLEOTIDE SEQUENCE [LARGE SCALE GENOMIC DNA]</scope>
</reference>
<reference key="3">
    <citation type="journal article" date="2019" name="Nature">
        <title>Noncoding deletions reveal a gene that is critical for intestinal function.</title>
        <authorList>
            <person name="Oz-Levi D."/>
            <person name="Olender T."/>
            <person name="Bar-Joseph I."/>
            <person name="Zhu Y."/>
            <person name="Marek-Yagel D."/>
            <person name="Barozzi I."/>
            <person name="Osterwalder M."/>
            <person name="Alkelai A."/>
            <person name="Ruzzo E.K."/>
            <person name="Han Y."/>
            <person name="Vos E.S.M."/>
            <person name="Reznik-Wolf H."/>
            <person name="Hartman C."/>
            <person name="Shamir R."/>
            <person name="Weiss B."/>
            <person name="Shapiro R."/>
            <person name="Pode-Shakked B."/>
            <person name="Tatarskyy P."/>
            <person name="Milgrom R."/>
            <person name="Schvimer M."/>
            <person name="Barshack I."/>
            <person name="Imai D.M."/>
            <person name="Coleman-Derr D."/>
            <person name="Dickel D.E."/>
            <person name="Nord A.S."/>
            <person name="Afzal V."/>
            <person name="van Bueren K.L."/>
            <person name="Barnes R.M."/>
            <person name="Black B.L."/>
            <person name="Mayhew C.N."/>
            <person name="Kuhar M.F."/>
            <person name="Pitstick A."/>
            <person name="Tekman M."/>
            <person name="Stanescu H.C."/>
            <person name="Wells J.M."/>
            <person name="Kleta R."/>
            <person name="de Laat W."/>
            <person name="Goldstein D.B."/>
            <person name="Pras E."/>
            <person name="Visel A."/>
            <person name="Lancet D."/>
            <person name="Anikster Y."/>
            <person name="Pennacchio L.A."/>
        </authorList>
    </citation>
    <scope>FUNCTION</scope>
    <scope>INVOLVEMENT IN DIAR11</scope>
</reference>
<dbReference type="EMBL" id="AL032819">
    <property type="status" value="NOT_ANNOTATED_CDS"/>
    <property type="molecule type" value="Genomic_DNA"/>
</dbReference>
<dbReference type="EMBL" id="AE006467">
    <property type="protein sequence ID" value="AAK61281.1"/>
    <property type="status" value="ALT_SEQ"/>
    <property type="molecule type" value="Genomic_DNA"/>
</dbReference>
<dbReference type="CCDS" id="CCDS92081.1"/>
<dbReference type="RefSeq" id="NP_001352239.1">
    <property type="nucleotide sequence ID" value="NM_001365310.2"/>
</dbReference>
<dbReference type="RefSeq" id="XP_011521082.1">
    <property type="nucleotide sequence ID" value="XM_011522780.2"/>
</dbReference>
<dbReference type="BioMuta" id="ENSG00000284395"/>
<dbReference type="PeptideAtlas" id="A0A1W2PR82"/>
<dbReference type="Ensembl" id="ENST00000640283.2">
    <property type="protein sequence ID" value="ENSP00000492108.2"/>
    <property type="gene ID" value="ENSG00000284395.2"/>
</dbReference>
<dbReference type="GeneID" id="105371045"/>
<dbReference type="MANE-Select" id="ENST00000640283.2">
    <property type="protein sequence ID" value="ENSP00000492108.2"/>
    <property type="RefSeq nucleotide sequence ID" value="NM_001365310.2"/>
    <property type="RefSeq protein sequence ID" value="NP_001352239.1"/>
</dbReference>
<dbReference type="AGR" id="HGNC:52293"/>
<dbReference type="GeneCards" id="PERCC1"/>
<dbReference type="HGNC" id="HGNC:52293">
    <property type="gene designation" value="PERCC1"/>
</dbReference>
<dbReference type="HPA" id="ENSG00000284395">
    <property type="expression patterns" value="Tissue enhanced (prostate, stomach)"/>
</dbReference>
<dbReference type="MalaCards" id="PERCC1"/>
<dbReference type="MIM" id="618656">
    <property type="type" value="gene"/>
</dbReference>
<dbReference type="MIM" id="618662">
    <property type="type" value="phenotype"/>
</dbReference>
<dbReference type="neXtProt" id="NX_A0A1W2PR82"/>
<dbReference type="Orphanet" id="92050">
    <property type="disease" value="Congenital tufting enteropathy"/>
</dbReference>
<dbReference type="VEuPathDB" id="HostDB:ENSG00000284395"/>
<dbReference type="GeneTree" id="ENSGT00390000002827"/>
<dbReference type="InParanoid" id="A0A1W2PR82"/>
<dbReference type="OMA" id="SWSTEAC"/>
<dbReference type="OrthoDB" id="10065076at2759"/>
<dbReference type="PAN-GO" id="A0A1W2PR82">
    <property type="GO annotations" value="0 GO annotations based on evolutionary models"/>
</dbReference>
<dbReference type="PRO" id="PR:A0A1W2PR82"/>
<dbReference type="Proteomes" id="UP000005640">
    <property type="component" value="Chromosome 16"/>
</dbReference>
<dbReference type="RNAct" id="A0A1W2PR82">
    <property type="molecule type" value="protein"/>
</dbReference>
<dbReference type="Bgee" id="ENSG00000284395">
    <property type="expression patterns" value="Expressed in duodenum and 27 other cell types or tissues"/>
</dbReference>
<dbReference type="GO" id="GO:0048546">
    <property type="term" value="P:digestive tract morphogenesis"/>
    <property type="evidence" value="ECO:0000250"/>
    <property type="project" value="UniProtKB"/>
</dbReference>
<dbReference type="GO" id="GO:0035883">
    <property type="term" value="P:enteroendocrine cell differentiation"/>
    <property type="evidence" value="ECO:0000250"/>
    <property type="project" value="UniProtKB"/>
</dbReference>
<dbReference type="InterPro" id="IPR053819">
    <property type="entry name" value="TEADIR3_omega_loop"/>
</dbReference>
<dbReference type="Pfam" id="PF15238">
    <property type="entry name" value="TEADIR3"/>
    <property type="match status" value="1"/>
</dbReference>
<gene>
    <name evidence="4 6" type="primary">PERCC1</name>
</gene>
<keyword id="KW-0217">Developmental protein</keyword>
<keyword id="KW-1185">Reference proteome</keyword>